<name>RL33_STRA1</name>
<gene>
    <name evidence="1" type="primary">rpmG</name>
    <name type="ordered locus">SAK_2049</name>
</gene>
<organism>
    <name type="scientific">Streptococcus agalactiae serotype Ia (strain ATCC 27591 / A909 / CDC SS700)</name>
    <dbReference type="NCBI Taxonomy" id="205921"/>
    <lineage>
        <taxon>Bacteria</taxon>
        <taxon>Bacillati</taxon>
        <taxon>Bacillota</taxon>
        <taxon>Bacilli</taxon>
        <taxon>Lactobacillales</taxon>
        <taxon>Streptococcaceae</taxon>
        <taxon>Streptococcus</taxon>
    </lineage>
</organism>
<protein>
    <recommendedName>
        <fullName evidence="1">Large ribosomal subunit protein bL33</fullName>
    </recommendedName>
    <alternativeName>
        <fullName evidence="2">50S ribosomal protein L33</fullName>
    </alternativeName>
</protein>
<reference key="1">
    <citation type="journal article" date="2005" name="Proc. Natl. Acad. Sci. U.S.A.">
        <title>Genome analysis of multiple pathogenic isolates of Streptococcus agalactiae: implications for the microbial 'pan-genome'.</title>
        <authorList>
            <person name="Tettelin H."/>
            <person name="Masignani V."/>
            <person name="Cieslewicz M.J."/>
            <person name="Donati C."/>
            <person name="Medini D."/>
            <person name="Ward N.L."/>
            <person name="Angiuoli S.V."/>
            <person name="Crabtree J."/>
            <person name="Jones A.L."/>
            <person name="Durkin A.S."/>
            <person name="DeBoy R.T."/>
            <person name="Davidsen T.M."/>
            <person name="Mora M."/>
            <person name="Scarselli M."/>
            <person name="Margarit y Ros I."/>
            <person name="Peterson J.D."/>
            <person name="Hauser C.R."/>
            <person name="Sundaram J.P."/>
            <person name="Nelson W.C."/>
            <person name="Madupu R."/>
            <person name="Brinkac L.M."/>
            <person name="Dodson R.J."/>
            <person name="Rosovitz M.J."/>
            <person name="Sullivan S.A."/>
            <person name="Daugherty S.C."/>
            <person name="Haft D.H."/>
            <person name="Selengut J."/>
            <person name="Gwinn M.L."/>
            <person name="Zhou L."/>
            <person name="Zafar N."/>
            <person name="Khouri H."/>
            <person name="Radune D."/>
            <person name="Dimitrov G."/>
            <person name="Watkins K."/>
            <person name="O'Connor K.J."/>
            <person name="Smith S."/>
            <person name="Utterback T.R."/>
            <person name="White O."/>
            <person name="Rubens C.E."/>
            <person name="Grandi G."/>
            <person name="Madoff L.C."/>
            <person name="Kasper D.L."/>
            <person name="Telford J.L."/>
            <person name="Wessels M.R."/>
            <person name="Rappuoli R."/>
            <person name="Fraser C.M."/>
        </authorList>
    </citation>
    <scope>NUCLEOTIDE SEQUENCE [LARGE SCALE GENOMIC DNA]</scope>
    <source>
        <strain>ATCC 27591 / A909 / CDC SS700</strain>
    </source>
</reference>
<evidence type="ECO:0000255" key="1">
    <source>
        <dbReference type="HAMAP-Rule" id="MF_00294"/>
    </source>
</evidence>
<evidence type="ECO:0000305" key="2"/>
<accession>Q3JYL4</accession>
<feature type="chain" id="PRO_0000356705" description="Large ribosomal subunit protein bL33">
    <location>
        <begin position="1"/>
        <end position="49"/>
    </location>
</feature>
<dbReference type="EMBL" id="CP000114">
    <property type="protein sequence ID" value="ABA44463.1"/>
    <property type="molecule type" value="Genomic_DNA"/>
</dbReference>
<dbReference type="RefSeq" id="WP_001265622.1">
    <property type="nucleotide sequence ID" value="NC_007432.1"/>
</dbReference>
<dbReference type="SMR" id="Q3JYL4"/>
<dbReference type="GeneID" id="98394265"/>
<dbReference type="KEGG" id="sak:SAK_2049"/>
<dbReference type="HOGENOM" id="CLU_190949_3_2_9"/>
<dbReference type="GO" id="GO:0005737">
    <property type="term" value="C:cytoplasm"/>
    <property type="evidence" value="ECO:0007669"/>
    <property type="project" value="UniProtKB-ARBA"/>
</dbReference>
<dbReference type="GO" id="GO:1990904">
    <property type="term" value="C:ribonucleoprotein complex"/>
    <property type="evidence" value="ECO:0007669"/>
    <property type="project" value="UniProtKB-KW"/>
</dbReference>
<dbReference type="GO" id="GO:0005840">
    <property type="term" value="C:ribosome"/>
    <property type="evidence" value="ECO:0007669"/>
    <property type="project" value="UniProtKB-KW"/>
</dbReference>
<dbReference type="GO" id="GO:0003735">
    <property type="term" value="F:structural constituent of ribosome"/>
    <property type="evidence" value="ECO:0007669"/>
    <property type="project" value="InterPro"/>
</dbReference>
<dbReference type="GO" id="GO:0006412">
    <property type="term" value="P:translation"/>
    <property type="evidence" value="ECO:0007669"/>
    <property type="project" value="UniProtKB-UniRule"/>
</dbReference>
<dbReference type="Gene3D" id="2.20.28.120">
    <property type="entry name" value="Ribosomal protein L33"/>
    <property type="match status" value="1"/>
</dbReference>
<dbReference type="HAMAP" id="MF_00294">
    <property type="entry name" value="Ribosomal_bL33"/>
    <property type="match status" value="1"/>
</dbReference>
<dbReference type="InterPro" id="IPR001705">
    <property type="entry name" value="Ribosomal_bL33"/>
</dbReference>
<dbReference type="InterPro" id="IPR018264">
    <property type="entry name" value="Ribosomal_bL33_CS"/>
</dbReference>
<dbReference type="InterPro" id="IPR038584">
    <property type="entry name" value="Ribosomal_bL33_sf"/>
</dbReference>
<dbReference type="InterPro" id="IPR011332">
    <property type="entry name" value="Ribosomal_zn-bd"/>
</dbReference>
<dbReference type="NCBIfam" id="NF001764">
    <property type="entry name" value="PRK00504.1"/>
    <property type="match status" value="1"/>
</dbReference>
<dbReference type="NCBIfam" id="NF001860">
    <property type="entry name" value="PRK00595.1"/>
    <property type="match status" value="1"/>
</dbReference>
<dbReference type="NCBIfam" id="TIGR01023">
    <property type="entry name" value="rpmG_bact"/>
    <property type="match status" value="1"/>
</dbReference>
<dbReference type="PANTHER" id="PTHR43168">
    <property type="entry name" value="50S RIBOSOMAL PROTEIN L33, CHLOROPLASTIC"/>
    <property type="match status" value="1"/>
</dbReference>
<dbReference type="PANTHER" id="PTHR43168:SF2">
    <property type="entry name" value="LARGE RIBOSOMAL SUBUNIT PROTEIN BL33C"/>
    <property type="match status" value="1"/>
</dbReference>
<dbReference type="Pfam" id="PF00471">
    <property type="entry name" value="Ribosomal_L33"/>
    <property type="match status" value="1"/>
</dbReference>
<dbReference type="SUPFAM" id="SSF57829">
    <property type="entry name" value="Zn-binding ribosomal proteins"/>
    <property type="match status" value="1"/>
</dbReference>
<dbReference type="PROSITE" id="PS00582">
    <property type="entry name" value="RIBOSOMAL_L33"/>
    <property type="match status" value="1"/>
</dbReference>
<keyword id="KW-0687">Ribonucleoprotein</keyword>
<keyword id="KW-0689">Ribosomal protein</keyword>
<comment type="similarity">
    <text evidence="1">Belongs to the bacterial ribosomal protein bL33 family.</text>
</comment>
<sequence>MRVNITLEHKESGERLYLTSKNKRNTPDRLQLKKYSPKLRKHVVFTEVK</sequence>
<proteinExistence type="inferred from homology"/>